<comment type="function">
    <text evidence="1">Molecular chaperone. Has ATPase activity.</text>
</comment>
<comment type="subunit">
    <text evidence="1">Homodimer.</text>
</comment>
<comment type="subcellular location">
    <subcellularLocation>
        <location evidence="1">Cytoplasm</location>
    </subcellularLocation>
</comment>
<comment type="similarity">
    <text evidence="1">Belongs to the heat shock protein 90 family.</text>
</comment>
<proteinExistence type="inferred from homology"/>
<feature type="chain" id="PRO_0000062998" description="Chaperone protein HtpG">
    <location>
        <begin position="1"/>
        <end position="640"/>
    </location>
</feature>
<feature type="region of interest" description="A; substrate-binding" evidence="1">
    <location>
        <begin position="1"/>
        <end position="343"/>
    </location>
</feature>
<feature type="region of interest" description="B" evidence="1">
    <location>
        <begin position="344"/>
        <end position="564"/>
    </location>
</feature>
<feature type="region of interest" description="C" evidence="1">
    <location>
        <begin position="565"/>
        <end position="640"/>
    </location>
</feature>
<accession>Q82TV8</accession>
<reference key="1">
    <citation type="journal article" date="2003" name="J. Bacteriol.">
        <title>Complete genome sequence of the ammonia-oxidizing bacterium and obligate chemolithoautotroph Nitrosomonas europaea.</title>
        <authorList>
            <person name="Chain P."/>
            <person name="Lamerdin J.E."/>
            <person name="Larimer F.W."/>
            <person name="Regala W."/>
            <person name="Lao V."/>
            <person name="Land M.L."/>
            <person name="Hauser L."/>
            <person name="Hooper A.B."/>
            <person name="Klotz M.G."/>
            <person name="Norton J."/>
            <person name="Sayavedra-Soto L.A."/>
            <person name="Arciero D.M."/>
            <person name="Hommes N.G."/>
            <person name="Whittaker M.M."/>
            <person name="Arp D.J."/>
        </authorList>
    </citation>
    <scope>NUCLEOTIDE SEQUENCE [LARGE SCALE GENOMIC DNA]</scope>
    <source>
        <strain>ATCC 19718 / CIP 103999 / KCTC 2705 / NBRC 14298</strain>
    </source>
</reference>
<organism>
    <name type="scientific">Nitrosomonas europaea (strain ATCC 19718 / CIP 103999 / KCTC 2705 / NBRC 14298)</name>
    <dbReference type="NCBI Taxonomy" id="228410"/>
    <lineage>
        <taxon>Bacteria</taxon>
        <taxon>Pseudomonadati</taxon>
        <taxon>Pseudomonadota</taxon>
        <taxon>Betaproteobacteria</taxon>
        <taxon>Nitrosomonadales</taxon>
        <taxon>Nitrosomonadaceae</taxon>
        <taxon>Nitrosomonas</taxon>
    </lineage>
</organism>
<keyword id="KW-0067">ATP-binding</keyword>
<keyword id="KW-0143">Chaperone</keyword>
<keyword id="KW-0963">Cytoplasm</keyword>
<keyword id="KW-0547">Nucleotide-binding</keyword>
<keyword id="KW-1185">Reference proteome</keyword>
<keyword id="KW-0346">Stress response</keyword>
<sequence length="640" mass="73146">MQTAENIEHLNFQAEANQLLKLMIHSLYSNKEIFLRELISNASDAADKLRFEGLSDAALYESDPDLKIRIAYDKEARTITIIDNGIGMSRQEVINNIGTIAKSGTREFFDSLTGDQAKDANLIGQFGVGFYSAFIVADKVTLTTRRAGLTIEHGVRWESGGEGEYTLETVEKPDRGTEIVLHLREGEDELLSSFQLRSIIRKYSDHITLPIVMKKEVWDDESKSYRLSDEDETINQASAIWARPKNEITQEQYDEFYKHVAHDFEPPLAHVHARVEGKQEYIQLLYIPAHAPFDLFDREHRHGLKLYVRRVFIMDDAEKLLPGYLRFVRGIIDSSDLPLNVSREILQESKDIDSIRAGSVKKVLGLIEDLAMSDKSEDQEKFKTFWREFGQVLKEGIAEDYSNRERIAKLLRFTSTHDEREEQTVSLDDYIARMKPEQEKIYYITADGLKAAQSSPHLEIFRKKGIEVLLLCDRIDEWLVANLNEYTGKSLQSIAKGNLDLGKLEDEEEKKEHEKEAGDFQELTNKMKEVLGEQVKDVRITYRLTESPACLVADTHDVSGNLGRLLKSAGQKVPDSKPFLEINPHHPMIQRLKYEEAKFADWSHILFDQALLAEGGQLEDPAGFVKRLNDLLLQNILSGK</sequence>
<evidence type="ECO:0000255" key="1">
    <source>
        <dbReference type="HAMAP-Rule" id="MF_00505"/>
    </source>
</evidence>
<protein>
    <recommendedName>
        <fullName evidence="1">Chaperone protein HtpG</fullName>
    </recommendedName>
    <alternativeName>
        <fullName evidence="1">Heat shock protein HtpG</fullName>
    </alternativeName>
    <alternativeName>
        <fullName evidence="1">High temperature protein G</fullName>
    </alternativeName>
</protein>
<name>HTPG_NITEU</name>
<gene>
    <name evidence="1" type="primary">htpG</name>
    <name type="synonym">hptG</name>
    <name type="ordered locus">NE1762</name>
</gene>
<dbReference type="EMBL" id="AL954747">
    <property type="protein sequence ID" value="CAD85673.1"/>
    <property type="molecule type" value="Genomic_DNA"/>
</dbReference>
<dbReference type="RefSeq" id="WP_011112313.1">
    <property type="nucleotide sequence ID" value="NC_004757.1"/>
</dbReference>
<dbReference type="SMR" id="Q82TV8"/>
<dbReference type="STRING" id="228410.NE1762"/>
<dbReference type="GeneID" id="87104923"/>
<dbReference type="KEGG" id="neu:NE1762"/>
<dbReference type="eggNOG" id="COG0326">
    <property type="taxonomic scope" value="Bacteria"/>
</dbReference>
<dbReference type="HOGENOM" id="CLU_006684_3_0_4"/>
<dbReference type="OrthoDB" id="9802640at2"/>
<dbReference type="PhylomeDB" id="Q82TV8"/>
<dbReference type="Proteomes" id="UP000001416">
    <property type="component" value="Chromosome"/>
</dbReference>
<dbReference type="GO" id="GO:0005737">
    <property type="term" value="C:cytoplasm"/>
    <property type="evidence" value="ECO:0007669"/>
    <property type="project" value="UniProtKB-SubCell"/>
</dbReference>
<dbReference type="GO" id="GO:0005524">
    <property type="term" value="F:ATP binding"/>
    <property type="evidence" value="ECO:0007669"/>
    <property type="project" value="UniProtKB-UniRule"/>
</dbReference>
<dbReference type="GO" id="GO:0016887">
    <property type="term" value="F:ATP hydrolysis activity"/>
    <property type="evidence" value="ECO:0007669"/>
    <property type="project" value="InterPro"/>
</dbReference>
<dbReference type="GO" id="GO:0140662">
    <property type="term" value="F:ATP-dependent protein folding chaperone"/>
    <property type="evidence" value="ECO:0007669"/>
    <property type="project" value="InterPro"/>
</dbReference>
<dbReference type="GO" id="GO:0051082">
    <property type="term" value="F:unfolded protein binding"/>
    <property type="evidence" value="ECO:0007669"/>
    <property type="project" value="UniProtKB-UniRule"/>
</dbReference>
<dbReference type="CDD" id="cd16927">
    <property type="entry name" value="HATPase_Hsp90-like"/>
    <property type="match status" value="1"/>
</dbReference>
<dbReference type="FunFam" id="3.40.50.11260:FF:000005">
    <property type="entry name" value="Heat shock protein 90"/>
    <property type="match status" value="1"/>
</dbReference>
<dbReference type="FunFam" id="3.30.230.80:FF:000002">
    <property type="entry name" value="Molecular chaperone HtpG"/>
    <property type="match status" value="1"/>
</dbReference>
<dbReference type="FunFam" id="3.30.565.10:FF:000009">
    <property type="entry name" value="Molecular chaperone HtpG"/>
    <property type="match status" value="1"/>
</dbReference>
<dbReference type="Gene3D" id="3.30.230.80">
    <property type="match status" value="1"/>
</dbReference>
<dbReference type="Gene3D" id="3.40.50.11260">
    <property type="match status" value="1"/>
</dbReference>
<dbReference type="Gene3D" id="1.20.120.790">
    <property type="entry name" value="Heat shock protein 90, C-terminal domain"/>
    <property type="match status" value="1"/>
</dbReference>
<dbReference type="Gene3D" id="3.30.565.10">
    <property type="entry name" value="Histidine kinase-like ATPase, C-terminal domain"/>
    <property type="match status" value="1"/>
</dbReference>
<dbReference type="HAMAP" id="MF_00505">
    <property type="entry name" value="HSP90"/>
    <property type="match status" value="1"/>
</dbReference>
<dbReference type="InterPro" id="IPR036890">
    <property type="entry name" value="HATPase_C_sf"/>
</dbReference>
<dbReference type="InterPro" id="IPR019805">
    <property type="entry name" value="Heat_shock_protein_90_CS"/>
</dbReference>
<dbReference type="InterPro" id="IPR037196">
    <property type="entry name" value="HSP90_C"/>
</dbReference>
<dbReference type="InterPro" id="IPR001404">
    <property type="entry name" value="Hsp90_fam"/>
</dbReference>
<dbReference type="InterPro" id="IPR020575">
    <property type="entry name" value="Hsp90_N"/>
</dbReference>
<dbReference type="InterPro" id="IPR020568">
    <property type="entry name" value="Ribosomal_Su5_D2-typ_SF"/>
</dbReference>
<dbReference type="NCBIfam" id="NF003555">
    <property type="entry name" value="PRK05218.1"/>
    <property type="match status" value="1"/>
</dbReference>
<dbReference type="PANTHER" id="PTHR11528">
    <property type="entry name" value="HEAT SHOCK PROTEIN 90 FAMILY MEMBER"/>
    <property type="match status" value="1"/>
</dbReference>
<dbReference type="Pfam" id="PF13589">
    <property type="entry name" value="HATPase_c_3"/>
    <property type="match status" value="1"/>
</dbReference>
<dbReference type="Pfam" id="PF00183">
    <property type="entry name" value="HSP90"/>
    <property type="match status" value="1"/>
</dbReference>
<dbReference type="PIRSF" id="PIRSF002583">
    <property type="entry name" value="Hsp90"/>
    <property type="match status" value="1"/>
</dbReference>
<dbReference type="PRINTS" id="PR00775">
    <property type="entry name" value="HEATSHOCK90"/>
</dbReference>
<dbReference type="SMART" id="SM00387">
    <property type="entry name" value="HATPase_c"/>
    <property type="match status" value="1"/>
</dbReference>
<dbReference type="SUPFAM" id="SSF55874">
    <property type="entry name" value="ATPase domain of HSP90 chaperone/DNA topoisomerase II/histidine kinase"/>
    <property type="match status" value="1"/>
</dbReference>
<dbReference type="SUPFAM" id="SSF110942">
    <property type="entry name" value="HSP90 C-terminal domain"/>
    <property type="match status" value="1"/>
</dbReference>
<dbReference type="SUPFAM" id="SSF54211">
    <property type="entry name" value="Ribosomal protein S5 domain 2-like"/>
    <property type="match status" value="1"/>
</dbReference>
<dbReference type="PROSITE" id="PS00298">
    <property type="entry name" value="HSP90"/>
    <property type="match status" value="1"/>
</dbReference>